<accession>Q2JV04</accession>
<gene>
    <name evidence="1" type="primary">minE</name>
    <name type="ordered locus">CYA_1266</name>
</gene>
<sequence length="120" mass="13011">MLLDFLDQLFSRHSGNSREQAKQRLKLILAHDRADLTPAALEAMRLEILGVVSRYVELDSEGMQFHLAAEGGTTALIANLPIRRVKPLAEARLNSCEGENPQQDPGAAPSEGGHLSSPSP</sequence>
<organism>
    <name type="scientific">Synechococcus sp. (strain JA-3-3Ab)</name>
    <name type="common">Cyanobacteria bacterium Yellowstone A-Prime</name>
    <dbReference type="NCBI Taxonomy" id="321327"/>
    <lineage>
        <taxon>Bacteria</taxon>
        <taxon>Bacillati</taxon>
        <taxon>Cyanobacteriota</taxon>
        <taxon>Cyanophyceae</taxon>
        <taxon>Synechococcales</taxon>
        <taxon>Synechococcaceae</taxon>
        <taxon>Synechococcus</taxon>
    </lineage>
</organism>
<name>MINE_SYNJA</name>
<protein>
    <recommendedName>
        <fullName evidence="1">Cell division topological specificity factor</fullName>
    </recommendedName>
</protein>
<keyword id="KW-0131">Cell cycle</keyword>
<keyword id="KW-0132">Cell division</keyword>
<feature type="chain" id="PRO_0000298201" description="Cell division topological specificity factor">
    <location>
        <begin position="1"/>
        <end position="120"/>
    </location>
</feature>
<feature type="region of interest" description="Disordered" evidence="2">
    <location>
        <begin position="93"/>
        <end position="120"/>
    </location>
</feature>
<comment type="function">
    <text evidence="1">Prevents the cell division inhibition by proteins MinC and MinD at internal division sites while permitting inhibition at polar sites. This ensures cell division at the proper site by restricting the formation of a division septum at the midpoint of the long axis of the cell.</text>
</comment>
<comment type="similarity">
    <text evidence="1">Belongs to the MinE family.</text>
</comment>
<dbReference type="EMBL" id="CP000239">
    <property type="protein sequence ID" value="ABC99448.1"/>
    <property type="molecule type" value="Genomic_DNA"/>
</dbReference>
<dbReference type="RefSeq" id="WP_011430128.1">
    <property type="nucleotide sequence ID" value="NC_007775.1"/>
</dbReference>
<dbReference type="STRING" id="321327.CYA_1266"/>
<dbReference type="KEGG" id="cya:CYA_1266"/>
<dbReference type="eggNOG" id="COG0851">
    <property type="taxonomic scope" value="Bacteria"/>
</dbReference>
<dbReference type="HOGENOM" id="CLU_137929_1_1_3"/>
<dbReference type="OrthoDB" id="9796578at2"/>
<dbReference type="Proteomes" id="UP000008818">
    <property type="component" value="Chromosome"/>
</dbReference>
<dbReference type="GO" id="GO:0051301">
    <property type="term" value="P:cell division"/>
    <property type="evidence" value="ECO:0007669"/>
    <property type="project" value="UniProtKB-KW"/>
</dbReference>
<dbReference type="GO" id="GO:0032955">
    <property type="term" value="P:regulation of division septum assembly"/>
    <property type="evidence" value="ECO:0007669"/>
    <property type="project" value="InterPro"/>
</dbReference>
<dbReference type="Gene3D" id="3.30.1070.10">
    <property type="entry name" value="Cell division topological specificity factor MinE"/>
    <property type="match status" value="1"/>
</dbReference>
<dbReference type="HAMAP" id="MF_00262">
    <property type="entry name" value="MinE"/>
    <property type="match status" value="1"/>
</dbReference>
<dbReference type="InterPro" id="IPR005527">
    <property type="entry name" value="MinE"/>
</dbReference>
<dbReference type="InterPro" id="IPR036707">
    <property type="entry name" value="MinE_sf"/>
</dbReference>
<dbReference type="NCBIfam" id="TIGR01215">
    <property type="entry name" value="minE"/>
    <property type="match status" value="1"/>
</dbReference>
<dbReference type="Pfam" id="PF03776">
    <property type="entry name" value="MinE"/>
    <property type="match status" value="1"/>
</dbReference>
<dbReference type="SUPFAM" id="SSF55229">
    <property type="entry name" value="Cell division protein MinE topological specificity domain"/>
    <property type="match status" value="1"/>
</dbReference>
<evidence type="ECO:0000255" key="1">
    <source>
        <dbReference type="HAMAP-Rule" id="MF_00262"/>
    </source>
</evidence>
<evidence type="ECO:0000256" key="2">
    <source>
        <dbReference type="SAM" id="MobiDB-lite"/>
    </source>
</evidence>
<reference key="1">
    <citation type="journal article" date="2007" name="ISME J.">
        <title>Population level functional diversity in a microbial community revealed by comparative genomic and metagenomic analyses.</title>
        <authorList>
            <person name="Bhaya D."/>
            <person name="Grossman A.R."/>
            <person name="Steunou A.-S."/>
            <person name="Khuri N."/>
            <person name="Cohan F.M."/>
            <person name="Hamamura N."/>
            <person name="Melendrez M.C."/>
            <person name="Bateson M.M."/>
            <person name="Ward D.M."/>
            <person name="Heidelberg J.F."/>
        </authorList>
    </citation>
    <scope>NUCLEOTIDE SEQUENCE [LARGE SCALE GENOMIC DNA]</scope>
    <source>
        <strain>JA-3-3Ab</strain>
    </source>
</reference>
<proteinExistence type="inferred from homology"/>